<reference key="1">
    <citation type="journal article" date="2005" name="Nature">
        <title>The genome of the social amoeba Dictyostelium discoideum.</title>
        <authorList>
            <person name="Eichinger L."/>
            <person name="Pachebat J.A."/>
            <person name="Gloeckner G."/>
            <person name="Rajandream M.A."/>
            <person name="Sucgang R."/>
            <person name="Berriman M."/>
            <person name="Song J."/>
            <person name="Olsen R."/>
            <person name="Szafranski K."/>
            <person name="Xu Q."/>
            <person name="Tunggal B."/>
            <person name="Kummerfeld S."/>
            <person name="Madera M."/>
            <person name="Konfortov B.A."/>
            <person name="Rivero F."/>
            <person name="Bankier A.T."/>
            <person name="Lehmann R."/>
            <person name="Hamlin N."/>
            <person name="Davies R."/>
            <person name="Gaudet P."/>
            <person name="Fey P."/>
            <person name="Pilcher K."/>
            <person name="Chen G."/>
            <person name="Saunders D."/>
            <person name="Sodergren E.J."/>
            <person name="Davis P."/>
            <person name="Kerhornou A."/>
            <person name="Nie X."/>
            <person name="Hall N."/>
            <person name="Anjard C."/>
            <person name="Hemphill L."/>
            <person name="Bason N."/>
            <person name="Farbrother P."/>
            <person name="Desany B."/>
            <person name="Just E."/>
            <person name="Morio T."/>
            <person name="Rost R."/>
            <person name="Churcher C.M."/>
            <person name="Cooper J."/>
            <person name="Haydock S."/>
            <person name="van Driessche N."/>
            <person name="Cronin A."/>
            <person name="Goodhead I."/>
            <person name="Muzny D.M."/>
            <person name="Mourier T."/>
            <person name="Pain A."/>
            <person name="Lu M."/>
            <person name="Harper D."/>
            <person name="Lindsay R."/>
            <person name="Hauser H."/>
            <person name="James K.D."/>
            <person name="Quiles M."/>
            <person name="Madan Babu M."/>
            <person name="Saito T."/>
            <person name="Buchrieser C."/>
            <person name="Wardroper A."/>
            <person name="Felder M."/>
            <person name="Thangavelu M."/>
            <person name="Johnson D."/>
            <person name="Knights A."/>
            <person name="Loulseged H."/>
            <person name="Mungall K.L."/>
            <person name="Oliver K."/>
            <person name="Price C."/>
            <person name="Quail M.A."/>
            <person name="Urushihara H."/>
            <person name="Hernandez J."/>
            <person name="Rabbinowitsch E."/>
            <person name="Steffen D."/>
            <person name="Sanders M."/>
            <person name="Ma J."/>
            <person name="Kohara Y."/>
            <person name="Sharp S."/>
            <person name="Simmonds M.N."/>
            <person name="Spiegler S."/>
            <person name="Tivey A."/>
            <person name="Sugano S."/>
            <person name="White B."/>
            <person name="Walker D."/>
            <person name="Woodward J.R."/>
            <person name="Winckler T."/>
            <person name="Tanaka Y."/>
            <person name="Shaulsky G."/>
            <person name="Schleicher M."/>
            <person name="Weinstock G.M."/>
            <person name="Rosenthal A."/>
            <person name="Cox E.C."/>
            <person name="Chisholm R.L."/>
            <person name="Gibbs R.A."/>
            <person name="Loomis W.F."/>
            <person name="Platzer M."/>
            <person name="Kay R.R."/>
            <person name="Williams J.G."/>
            <person name="Dear P.H."/>
            <person name="Noegel A.A."/>
            <person name="Barrell B.G."/>
            <person name="Kuspa A."/>
        </authorList>
    </citation>
    <scope>NUCLEOTIDE SEQUENCE [LARGE SCALE GENOMIC DNA]</scope>
    <source>
        <strain>AX4</strain>
    </source>
</reference>
<feature type="chain" id="PRO_0000328141" description="Crooked neck-like protein 1">
    <location>
        <begin position="1"/>
        <end position="705"/>
    </location>
</feature>
<feature type="repeat" description="HAT 1">
    <location>
        <begin position="55"/>
        <end position="87"/>
    </location>
</feature>
<feature type="repeat" description="HAT 2">
    <location>
        <begin position="89"/>
        <end position="121"/>
    </location>
</feature>
<feature type="repeat" description="HAT 3">
    <location>
        <begin position="123"/>
        <end position="155"/>
    </location>
</feature>
<feature type="repeat" description="HAT 4">
    <location>
        <begin position="157"/>
        <end position="188"/>
    </location>
</feature>
<feature type="repeat" description="HAT 5">
    <location>
        <begin position="190"/>
        <end position="221"/>
    </location>
</feature>
<feature type="repeat" description="HAT 6">
    <location>
        <begin position="223"/>
        <end position="258"/>
    </location>
</feature>
<feature type="repeat" description="HAT 7">
    <location>
        <begin position="260"/>
        <end position="294"/>
    </location>
</feature>
<feature type="repeat" description="HAT 8">
    <location>
        <begin position="304"/>
        <end position="336"/>
    </location>
</feature>
<feature type="repeat" description="HAT 9">
    <location>
        <begin position="338"/>
        <end position="372"/>
    </location>
</feature>
<feature type="repeat" description="HAT 10">
    <location>
        <begin position="382"/>
        <end position="418"/>
    </location>
</feature>
<feature type="repeat" description="HAT 11">
    <location>
        <begin position="420"/>
        <end position="451"/>
    </location>
</feature>
<feature type="repeat" description="HAT 12">
    <location>
        <begin position="453"/>
        <end position="485"/>
    </location>
</feature>
<feature type="repeat" description="HAT 13">
    <location>
        <begin position="487"/>
        <end position="521"/>
    </location>
</feature>
<feature type="repeat" description="HAT 14">
    <location>
        <begin position="523"/>
        <end position="554"/>
    </location>
</feature>
<feature type="repeat" description="HAT 15">
    <location>
        <begin position="597"/>
        <end position="629"/>
    </location>
</feature>
<feature type="region of interest" description="Disordered" evidence="2">
    <location>
        <begin position="559"/>
        <end position="591"/>
    </location>
</feature>
<gene>
    <name type="primary">crnkl1</name>
    <name type="synonym">crn</name>
    <name type="ORF">DDB_G0278819</name>
</gene>
<proteinExistence type="inferred from homology"/>
<dbReference type="EMBL" id="AAFI02000024">
    <property type="protein sequence ID" value="EAL68011.1"/>
    <property type="molecule type" value="Genomic_DNA"/>
</dbReference>
<dbReference type="RefSeq" id="XP_641986.1">
    <property type="nucleotide sequence ID" value="XM_636894.1"/>
</dbReference>
<dbReference type="SMR" id="Q54XP4"/>
<dbReference type="FunCoup" id="Q54XP4">
    <property type="interactions" value="1150"/>
</dbReference>
<dbReference type="STRING" id="44689.Q54XP4"/>
<dbReference type="PaxDb" id="44689-DDB0233480"/>
<dbReference type="EnsemblProtists" id="EAL68011">
    <property type="protein sequence ID" value="EAL68011"/>
    <property type="gene ID" value="DDB_G0278819"/>
</dbReference>
<dbReference type="GeneID" id="8621718"/>
<dbReference type="KEGG" id="ddi:DDB_G0278819"/>
<dbReference type="dictyBase" id="DDB_G0278819"/>
<dbReference type="VEuPathDB" id="AmoebaDB:DDB_G0278819"/>
<dbReference type="eggNOG" id="KOG1915">
    <property type="taxonomic scope" value="Eukaryota"/>
</dbReference>
<dbReference type="HOGENOM" id="CLU_011554_1_0_1"/>
<dbReference type="InParanoid" id="Q54XP4"/>
<dbReference type="OMA" id="HIKVWIS"/>
<dbReference type="PhylomeDB" id="Q54XP4"/>
<dbReference type="Reactome" id="R-DDI-72163">
    <property type="pathway name" value="mRNA Splicing - Major Pathway"/>
</dbReference>
<dbReference type="PRO" id="PR:Q54XP4"/>
<dbReference type="Proteomes" id="UP000002195">
    <property type="component" value="Chromosome 3"/>
</dbReference>
<dbReference type="GO" id="GO:0016607">
    <property type="term" value="C:nuclear speck"/>
    <property type="evidence" value="ECO:0007669"/>
    <property type="project" value="UniProtKB-SubCell"/>
</dbReference>
<dbReference type="GO" id="GO:0005634">
    <property type="term" value="C:nucleus"/>
    <property type="evidence" value="ECO:0000250"/>
    <property type="project" value="UniProtKB"/>
</dbReference>
<dbReference type="GO" id="GO:0071014">
    <property type="term" value="C:post-mRNA release spliceosomal complex"/>
    <property type="evidence" value="ECO:0000318"/>
    <property type="project" value="GO_Central"/>
</dbReference>
<dbReference type="GO" id="GO:0000974">
    <property type="term" value="C:Prp19 complex"/>
    <property type="evidence" value="ECO:0000318"/>
    <property type="project" value="GO_Central"/>
</dbReference>
<dbReference type="GO" id="GO:0005681">
    <property type="term" value="C:spliceosomal complex"/>
    <property type="evidence" value="ECO:0000250"/>
    <property type="project" value="UniProtKB"/>
</dbReference>
<dbReference type="GO" id="GO:0071007">
    <property type="term" value="C:U2-type catalytic step 2 spliceosome"/>
    <property type="evidence" value="ECO:0000250"/>
    <property type="project" value="UniProtKB"/>
</dbReference>
<dbReference type="GO" id="GO:0003723">
    <property type="term" value="F:RNA binding"/>
    <property type="evidence" value="ECO:0000250"/>
    <property type="project" value="UniProtKB"/>
</dbReference>
<dbReference type="GO" id="GO:0000398">
    <property type="term" value="P:mRNA splicing, via spliceosome"/>
    <property type="evidence" value="ECO:0000250"/>
    <property type="project" value="UniProtKB"/>
</dbReference>
<dbReference type="GO" id="GO:0000245">
    <property type="term" value="P:spliceosomal complex assembly"/>
    <property type="evidence" value="ECO:0000250"/>
    <property type="project" value="UniProtKB"/>
</dbReference>
<dbReference type="FunFam" id="1.25.40.10:FF:000048">
    <property type="entry name" value="Cell cycle control protein"/>
    <property type="match status" value="1"/>
</dbReference>
<dbReference type="FunFam" id="1.25.40.10:FF:000327">
    <property type="entry name" value="Pre-mRNA-splicing factor CLF1"/>
    <property type="match status" value="1"/>
</dbReference>
<dbReference type="Gene3D" id="1.25.40.10">
    <property type="entry name" value="Tetratricopeptide repeat domain"/>
    <property type="match status" value="3"/>
</dbReference>
<dbReference type="InterPro" id="IPR003107">
    <property type="entry name" value="HAT"/>
</dbReference>
<dbReference type="InterPro" id="IPR055430">
    <property type="entry name" value="HAT_Syf1_CNRKL1_C"/>
</dbReference>
<dbReference type="InterPro" id="IPR045075">
    <property type="entry name" value="Syf1-like"/>
</dbReference>
<dbReference type="InterPro" id="IPR011990">
    <property type="entry name" value="TPR-like_helical_dom_sf"/>
</dbReference>
<dbReference type="PANTHER" id="PTHR11246:SF3">
    <property type="entry name" value="CROOKED NECK-LIKE PROTEIN 1"/>
    <property type="match status" value="1"/>
</dbReference>
<dbReference type="PANTHER" id="PTHR11246">
    <property type="entry name" value="PRE-MRNA SPLICING FACTOR"/>
    <property type="match status" value="1"/>
</dbReference>
<dbReference type="Pfam" id="PF23231">
    <property type="entry name" value="HAT_Syf1_CNRKL1_C"/>
    <property type="match status" value="2"/>
</dbReference>
<dbReference type="SMART" id="SM00386">
    <property type="entry name" value="HAT"/>
    <property type="match status" value="14"/>
</dbReference>
<dbReference type="SUPFAM" id="SSF48452">
    <property type="entry name" value="TPR-like"/>
    <property type="match status" value="1"/>
</dbReference>
<keyword id="KW-0507">mRNA processing</keyword>
<keyword id="KW-0508">mRNA splicing</keyword>
<keyword id="KW-0539">Nucleus</keyword>
<keyword id="KW-1185">Reference proteome</keyword>
<keyword id="KW-0677">Repeat</keyword>
<keyword id="KW-0747">Spliceosome</keyword>
<protein>
    <recommendedName>
        <fullName>Crooked neck-like protein 1</fullName>
    </recommendedName>
    <alternativeName>
        <fullName>Crooked neck homolog</fullName>
    </alternativeName>
</protein>
<organism>
    <name type="scientific">Dictyostelium discoideum</name>
    <name type="common">Social amoeba</name>
    <dbReference type="NCBI Taxonomy" id="44689"/>
    <lineage>
        <taxon>Eukaryota</taxon>
        <taxon>Amoebozoa</taxon>
        <taxon>Evosea</taxon>
        <taxon>Eumycetozoa</taxon>
        <taxon>Dictyostelia</taxon>
        <taxon>Dictyosteliales</taxon>
        <taxon>Dictyosteliaceae</taxon>
        <taxon>Dictyostelium</taxon>
    </lineage>
</organism>
<name>CRNL1_DICDI</name>
<comment type="function">
    <text evidence="1">Involved in pre-mRNA splicing process.</text>
</comment>
<comment type="subunit">
    <text evidence="1">Identified in the spliceosome C complex.</text>
</comment>
<comment type="subcellular location">
    <subcellularLocation>
        <location evidence="1">Nucleus</location>
    </subcellularLocation>
    <subcellularLocation>
        <location evidence="1">Nucleus speckle</location>
    </subcellularLocation>
    <text evidence="1">Colocalizes with core spliceosomal snRNP proteins.</text>
</comment>
<comment type="similarity">
    <text evidence="3">Belongs to the crooked-neck family.</text>
</comment>
<evidence type="ECO:0000250" key="1">
    <source>
        <dbReference type="UniProtKB" id="Q9BZJ0"/>
    </source>
</evidence>
<evidence type="ECO:0000256" key="2">
    <source>
        <dbReference type="SAM" id="MobiDB-lite"/>
    </source>
</evidence>
<evidence type="ECO:0000305" key="3"/>
<sequence>MNQNRTGGVSKVKNKSAAPVQITAEQILRVAHENQQTLPKAPPKQVITDQEELEDYRLRKRQQYESLLGRNRKTAAIYIKYAAWEESQKDLTRARSVFERFLDIDHRIPTVWIKYAEMEMKNKNINLARNIWDRAVCLLPRVSQLWFKYTFMEDMLGNYPAARAIFERWMQWKPEPQAWNSYLKFEQRLKLFENTRLIFEKYILVHPYIKTWIKYTKFEERLGNIENARTIFQRAIEFLGEDGNDEQLFIAFAKFEEKYKEIERARVIYKYAIDHVPKSRAKDLFDTFTNFEKQHGDRIGIEDVVLGKKRFQYEEEIKKNSKNYDIWFDYLKMEEINGEIEKTREIYERSIGNLPPTNEKKHWKRYIYLWINYALFEELISKDMERARSVYSECIKLIPHKEFSFSKIWILYANFEIRQLNLDKARLIYGQAIGRNPKSKIFDQYIHLEIELGNFDRVRTLYEKYLEIMPDNCDAWCKFAQLETELGETVRARAIFELAIQQPNLDRPEVVWKDFIDSEIQLKQFDFVKQLYRKLLEKTNHVKVWIGFIKFVHSIKDKQQQKQRQQQQEEDGDSNTTKKDGGDDDNNDDINKPTREIFIEAHKSLSNSDKEERLLLLESWKEFEQTFGNQETLNQVLKKIPQRVIKRRSDGNGGIEEYFDYIFPEEEKSTQTSLKLLEAAQRWKKLKQQQELQKQQELQKQQQDS</sequence>
<accession>Q54XP4</accession>